<dbReference type="EMBL" id="CM003140">
    <property type="protein sequence ID" value="KIS72085.1"/>
    <property type="molecule type" value="Genomic_DNA"/>
</dbReference>
<dbReference type="RefSeq" id="XP_011386354.1">
    <property type="nucleotide sequence ID" value="XM_011388052.1"/>
</dbReference>
<dbReference type="SMR" id="Q4PHA6"/>
<dbReference type="FunCoup" id="Q4PHA6">
    <property type="interactions" value="571"/>
</dbReference>
<dbReference type="STRING" id="237631.Q4PHA6"/>
<dbReference type="EnsemblFungi" id="KIS72085">
    <property type="protein sequence ID" value="KIS72085"/>
    <property type="gene ID" value="UMAG_00507"/>
</dbReference>
<dbReference type="GeneID" id="23561787"/>
<dbReference type="KEGG" id="uma:UMAG_00507"/>
<dbReference type="VEuPathDB" id="FungiDB:UMAG_00507"/>
<dbReference type="eggNOG" id="KOG3169">
    <property type="taxonomic scope" value="Eukaryota"/>
</dbReference>
<dbReference type="HOGENOM" id="CLU_090401_0_0_1"/>
<dbReference type="InParanoid" id="Q4PHA6"/>
<dbReference type="OMA" id="GHHGRFI"/>
<dbReference type="OrthoDB" id="344220at2759"/>
<dbReference type="Proteomes" id="UP000000561">
    <property type="component" value="Chromosome 1"/>
</dbReference>
<dbReference type="GO" id="GO:0070847">
    <property type="term" value="C:core mediator complex"/>
    <property type="evidence" value="ECO:0000318"/>
    <property type="project" value="GO_Central"/>
</dbReference>
<dbReference type="GO" id="GO:0016592">
    <property type="term" value="C:mediator complex"/>
    <property type="evidence" value="ECO:0000318"/>
    <property type="project" value="GO_Central"/>
</dbReference>
<dbReference type="GO" id="GO:0003713">
    <property type="term" value="F:transcription coactivator activity"/>
    <property type="evidence" value="ECO:0000318"/>
    <property type="project" value="GO_Central"/>
</dbReference>
<dbReference type="GO" id="GO:0006357">
    <property type="term" value="P:regulation of transcription by RNA polymerase II"/>
    <property type="evidence" value="ECO:0000318"/>
    <property type="project" value="GO_Central"/>
</dbReference>
<dbReference type="Gene3D" id="3.10.450.580">
    <property type="entry name" value="Mediator complex, subunit Med6"/>
    <property type="match status" value="1"/>
</dbReference>
<dbReference type="InterPro" id="IPR007018">
    <property type="entry name" value="Mediator_Med6"/>
</dbReference>
<dbReference type="InterPro" id="IPR038566">
    <property type="entry name" value="Mediator_Med6_sf"/>
</dbReference>
<dbReference type="PANTHER" id="PTHR13104">
    <property type="entry name" value="MED-6-RELATED"/>
    <property type="match status" value="1"/>
</dbReference>
<dbReference type="Pfam" id="PF04934">
    <property type="entry name" value="Med6"/>
    <property type="match status" value="1"/>
</dbReference>
<evidence type="ECO:0000250" key="1"/>
<evidence type="ECO:0000256" key="2">
    <source>
        <dbReference type="SAM" id="MobiDB-lite"/>
    </source>
</evidence>
<evidence type="ECO:0000305" key="3"/>
<organism>
    <name type="scientific">Mycosarcoma maydis</name>
    <name type="common">Corn smut fungus</name>
    <name type="synonym">Ustilago maydis</name>
    <dbReference type="NCBI Taxonomy" id="5270"/>
    <lineage>
        <taxon>Eukaryota</taxon>
        <taxon>Fungi</taxon>
        <taxon>Dikarya</taxon>
        <taxon>Basidiomycota</taxon>
        <taxon>Ustilaginomycotina</taxon>
        <taxon>Ustilaginomycetes</taxon>
        <taxon>Ustilaginales</taxon>
        <taxon>Ustilaginaceae</taxon>
        <taxon>Mycosarcoma</taxon>
    </lineage>
</organism>
<proteinExistence type="inferred from homology"/>
<keyword id="KW-0010">Activator</keyword>
<keyword id="KW-0539">Nucleus</keyword>
<keyword id="KW-1185">Reference proteome</keyword>
<keyword id="KW-0804">Transcription</keyword>
<keyword id="KW-0805">Transcription regulation</keyword>
<sequence>MSTQPAPPPEAPSNLLHVQFKNPEFLSYLSHLQSTGQVSLGRDSSCAKFDPAHPLTEHNVMAYFATSPFFDRRSNNEQIRMQNIANGIQNLSGGMGAKQEEQELKRFTGLEFVLVHSREPTCFVVQKRWRTSPTETTPLAAYYVINDSIYQAPDLYSILATRLQSTVYALRMSLSTQRRARPSFDPRRGHHGRFIVADAPTSIDADSNRTCTTQSTHTHHADDHTPQLEHQQDHIHPPPPAAFTQPQLKKARFD</sequence>
<accession>Q4PHA6</accession>
<accession>A0A0D1ECY9</accession>
<gene>
    <name type="primary">MED6</name>
    <name type="ORF">UMAG_00507</name>
</gene>
<comment type="function">
    <text evidence="1">Component of the Mediator complex, a coactivator involved in the regulated transcription of nearly all RNA polymerase II-dependent genes. Mediator functions as a bridge to convey information from gene-specific regulatory proteins to the basal RNA polymerase II transcription machinery. Mediator is recruited to promoters by direct interactions with regulatory proteins and serves as a scaffold for the assembly of a functional preinitiation complex with RNA polymerase II and the general transcription factors (By similarity).</text>
</comment>
<comment type="subunit">
    <text evidence="1">Component of the Mediator complex.</text>
</comment>
<comment type="subcellular location">
    <subcellularLocation>
        <location evidence="1">Nucleus</location>
    </subcellularLocation>
</comment>
<comment type="similarity">
    <text evidence="3">Belongs to the Mediator complex subunit 6 family.</text>
</comment>
<name>MED6_MYCMD</name>
<protein>
    <recommendedName>
        <fullName>Mediator of RNA polymerase II transcription subunit 6</fullName>
    </recommendedName>
    <alternativeName>
        <fullName>Mediator complex subunit 6</fullName>
    </alternativeName>
</protein>
<feature type="chain" id="PRO_0000303063" description="Mediator of RNA polymerase II transcription subunit 6">
    <location>
        <begin position="1"/>
        <end position="254"/>
    </location>
</feature>
<feature type="region of interest" description="Disordered" evidence="2">
    <location>
        <begin position="205"/>
        <end position="254"/>
    </location>
</feature>
<feature type="compositionally biased region" description="Polar residues" evidence="2">
    <location>
        <begin position="205"/>
        <end position="216"/>
    </location>
</feature>
<feature type="compositionally biased region" description="Basic and acidic residues" evidence="2">
    <location>
        <begin position="219"/>
        <end position="236"/>
    </location>
</feature>
<reference key="1">
    <citation type="journal article" date="2006" name="Nature">
        <title>Insights from the genome of the biotrophic fungal plant pathogen Ustilago maydis.</title>
        <authorList>
            <person name="Kaemper J."/>
            <person name="Kahmann R."/>
            <person name="Boelker M."/>
            <person name="Ma L.-J."/>
            <person name="Brefort T."/>
            <person name="Saville B.J."/>
            <person name="Banuett F."/>
            <person name="Kronstad J.W."/>
            <person name="Gold S.E."/>
            <person name="Mueller O."/>
            <person name="Perlin M.H."/>
            <person name="Woesten H.A.B."/>
            <person name="de Vries R."/>
            <person name="Ruiz-Herrera J."/>
            <person name="Reynaga-Pena C.G."/>
            <person name="Snetselaar K."/>
            <person name="McCann M."/>
            <person name="Perez-Martin J."/>
            <person name="Feldbruegge M."/>
            <person name="Basse C.W."/>
            <person name="Steinberg G."/>
            <person name="Ibeas J.I."/>
            <person name="Holloman W."/>
            <person name="Guzman P."/>
            <person name="Farman M.L."/>
            <person name="Stajich J.E."/>
            <person name="Sentandreu R."/>
            <person name="Gonzalez-Prieto J.M."/>
            <person name="Kennell J.C."/>
            <person name="Molina L."/>
            <person name="Schirawski J."/>
            <person name="Mendoza-Mendoza A."/>
            <person name="Greilinger D."/>
            <person name="Muench K."/>
            <person name="Roessel N."/>
            <person name="Scherer M."/>
            <person name="Vranes M."/>
            <person name="Ladendorf O."/>
            <person name="Vincon V."/>
            <person name="Fuchs U."/>
            <person name="Sandrock B."/>
            <person name="Meng S."/>
            <person name="Ho E.C.H."/>
            <person name="Cahill M.J."/>
            <person name="Boyce K.J."/>
            <person name="Klose J."/>
            <person name="Klosterman S.J."/>
            <person name="Deelstra H.J."/>
            <person name="Ortiz-Castellanos L."/>
            <person name="Li W."/>
            <person name="Sanchez-Alonso P."/>
            <person name="Schreier P.H."/>
            <person name="Haeuser-Hahn I."/>
            <person name="Vaupel M."/>
            <person name="Koopmann E."/>
            <person name="Friedrich G."/>
            <person name="Voss H."/>
            <person name="Schlueter T."/>
            <person name="Margolis J."/>
            <person name="Platt D."/>
            <person name="Swimmer C."/>
            <person name="Gnirke A."/>
            <person name="Chen F."/>
            <person name="Vysotskaia V."/>
            <person name="Mannhaupt G."/>
            <person name="Gueldener U."/>
            <person name="Muensterkoetter M."/>
            <person name="Haase D."/>
            <person name="Oesterheld M."/>
            <person name="Mewes H.-W."/>
            <person name="Mauceli E.W."/>
            <person name="DeCaprio D."/>
            <person name="Wade C.M."/>
            <person name="Butler J."/>
            <person name="Young S.K."/>
            <person name="Jaffe D.B."/>
            <person name="Calvo S.E."/>
            <person name="Nusbaum C."/>
            <person name="Galagan J.E."/>
            <person name="Birren B.W."/>
        </authorList>
    </citation>
    <scope>NUCLEOTIDE SEQUENCE [LARGE SCALE GENOMIC DNA]</scope>
    <source>
        <strain>DSM 14603 / FGSC 9021 / UM521</strain>
    </source>
</reference>
<reference key="2">
    <citation type="submission" date="2014-09" db="EMBL/GenBank/DDBJ databases">
        <authorList>
            <person name="Gueldener U."/>
            <person name="Muensterkoetter M."/>
            <person name="Walter M.C."/>
            <person name="Mannhaupt G."/>
            <person name="Kahmann R."/>
        </authorList>
    </citation>
    <scope>GENOME REANNOTATION</scope>
    <source>
        <strain>DSM 14603 / FGSC 9021 / UM521</strain>
    </source>
</reference>